<reference key="1">
    <citation type="journal article" date="1990" name="J. Gen. Microbiol.">
        <title>Isolation, characterization and nucleotide sequences of the aroC genes encoding chorismate synthase from Salmonella typhi and Escherichia coli.</title>
        <authorList>
            <person name="Charles I.G."/>
            <person name="Lamb H.K."/>
            <person name="Pickard D."/>
            <person name="Dougan G."/>
            <person name="Hawkins A.R."/>
        </authorList>
    </citation>
    <scope>NUCLEOTIDE SEQUENCE [GENOMIC DNA]</scope>
    <source>
        <strain>ATCC 700931 / Ty2</strain>
    </source>
</reference>
<reference key="2">
    <citation type="journal article" date="2001" name="Nature">
        <title>Complete genome sequence of a multiple drug resistant Salmonella enterica serovar Typhi CT18.</title>
        <authorList>
            <person name="Parkhill J."/>
            <person name="Dougan G."/>
            <person name="James K.D."/>
            <person name="Thomson N.R."/>
            <person name="Pickard D."/>
            <person name="Wain J."/>
            <person name="Churcher C.M."/>
            <person name="Mungall K.L."/>
            <person name="Bentley S.D."/>
            <person name="Holden M.T.G."/>
            <person name="Sebaihia M."/>
            <person name="Baker S."/>
            <person name="Basham D."/>
            <person name="Brooks K."/>
            <person name="Chillingworth T."/>
            <person name="Connerton P."/>
            <person name="Cronin A."/>
            <person name="Davis P."/>
            <person name="Davies R.M."/>
            <person name="Dowd L."/>
            <person name="White N."/>
            <person name="Farrar J."/>
            <person name="Feltwell T."/>
            <person name="Hamlin N."/>
            <person name="Haque A."/>
            <person name="Hien T.T."/>
            <person name="Holroyd S."/>
            <person name="Jagels K."/>
            <person name="Krogh A."/>
            <person name="Larsen T.S."/>
            <person name="Leather S."/>
            <person name="Moule S."/>
            <person name="O'Gaora P."/>
            <person name="Parry C."/>
            <person name="Quail M.A."/>
            <person name="Rutherford K.M."/>
            <person name="Simmonds M."/>
            <person name="Skelton J."/>
            <person name="Stevens K."/>
            <person name="Whitehead S."/>
            <person name="Barrell B.G."/>
        </authorList>
    </citation>
    <scope>NUCLEOTIDE SEQUENCE [LARGE SCALE GENOMIC DNA]</scope>
    <source>
        <strain>CT18</strain>
    </source>
</reference>
<reference key="3">
    <citation type="journal article" date="2003" name="J. Bacteriol.">
        <title>Comparative genomics of Salmonella enterica serovar Typhi strains Ty2 and CT18.</title>
        <authorList>
            <person name="Deng W."/>
            <person name="Liou S.-R."/>
            <person name="Plunkett G. III"/>
            <person name="Mayhew G.F."/>
            <person name="Rose D.J."/>
            <person name="Burland V."/>
            <person name="Kodoyianni V."/>
            <person name="Schwartz D.C."/>
            <person name="Blattner F.R."/>
        </authorList>
    </citation>
    <scope>NUCLEOTIDE SEQUENCE [LARGE SCALE GENOMIC DNA]</scope>
    <source>
        <strain>ATCC 700931 / Ty2</strain>
    </source>
</reference>
<protein>
    <recommendedName>
        <fullName evidence="1">Chorismate synthase</fullName>
        <shortName evidence="1">CS</shortName>
        <ecNumber evidence="1">4.2.3.5</ecNumber>
    </recommendedName>
    <alternativeName>
        <fullName evidence="1">5-enolpyruvylshikimate-3-phosphate phospholyase</fullName>
    </alternativeName>
</protein>
<sequence>MAGNTIGQLFRVTTFGESHGLALGGIVDGVPPGIPLTEADLQHDLDRRRPGTSRYTTQRREPDQVKILSGVFDGVTTGTSIGLLIENTDQRSQDYSAIKDVFRPGHADYTYEQKYGLRDYRGGGRSSARETAMRVAAGAIAKKYLAEKFGIEIRGCLTQMGDIPLEIKDWRQVELNPFFCPDADKLDALDELMRALKKEGDSIGAKVTVMASGVPAGLGEPVFDRLDADIAHALMSINAVKGVEIGEGFNVVALRGSQNRDEITAQGFQSNHAGGILGGISSGQHIVAHMALKPTSSITVPGRTINRMGEEVEMITKGRHDPCVGIRAVPIAEAMLAIVLMDHLLRHRAQNADVKTEIPRW</sequence>
<keyword id="KW-0028">Amino-acid biosynthesis</keyword>
<keyword id="KW-0057">Aromatic amino acid biosynthesis</keyword>
<keyword id="KW-0274">FAD</keyword>
<keyword id="KW-0285">Flavoprotein</keyword>
<keyword id="KW-0288">FMN</keyword>
<keyword id="KW-0456">Lyase</keyword>
<keyword id="KW-0521">NADP</keyword>
<organism>
    <name type="scientific">Salmonella typhi</name>
    <dbReference type="NCBI Taxonomy" id="90370"/>
    <lineage>
        <taxon>Bacteria</taxon>
        <taxon>Pseudomonadati</taxon>
        <taxon>Pseudomonadota</taxon>
        <taxon>Gammaproteobacteria</taxon>
        <taxon>Enterobacterales</taxon>
        <taxon>Enterobacteriaceae</taxon>
        <taxon>Salmonella</taxon>
    </lineage>
</organism>
<dbReference type="EC" id="4.2.3.5" evidence="1"/>
<dbReference type="EMBL" id="M27715">
    <property type="protein sequence ID" value="AAA27029.1"/>
    <property type="molecule type" value="Genomic_DNA"/>
</dbReference>
<dbReference type="EMBL" id="AL513382">
    <property type="protein sequence ID" value="CAD07616.1"/>
    <property type="molecule type" value="Genomic_DNA"/>
</dbReference>
<dbReference type="EMBL" id="AE014613">
    <property type="protein sequence ID" value="AAO68187.1"/>
    <property type="molecule type" value="Genomic_DNA"/>
</dbReference>
<dbReference type="PIR" id="A33119">
    <property type="entry name" value="SYEBKR"/>
</dbReference>
<dbReference type="RefSeq" id="NP_456925.1">
    <property type="nucleotide sequence ID" value="NC_003198.1"/>
</dbReference>
<dbReference type="RefSeq" id="WP_000918475.1">
    <property type="nucleotide sequence ID" value="NZ_WSUR01000045.1"/>
</dbReference>
<dbReference type="SMR" id="P16280"/>
<dbReference type="STRING" id="220341.gene:17586513"/>
<dbReference type="KEGG" id="stt:t0480"/>
<dbReference type="KEGG" id="sty:STY2616"/>
<dbReference type="PATRIC" id="fig|220341.7.peg.2649"/>
<dbReference type="eggNOG" id="COG0082">
    <property type="taxonomic scope" value="Bacteria"/>
</dbReference>
<dbReference type="HOGENOM" id="CLU_034547_0_2_6"/>
<dbReference type="OMA" id="MLSINAV"/>
<dbReference type="OrthoDB" id="9771806at2"/>
<dbReference type="UniPathway" id="UPA00053">
    <property type="reaction ID" value="UER00090"/>
</dbReference>
<dbReference type="Proteomes" id="UP000000541">
    <property type="component" value="Chromosome"/>
</dbReference>
<dbReference type="Proteomes" id="UP000002670">
    <property type="component" value="Chromosome"/>
</dbReference>
<dbReference type="GO" id="GO:0005829">
    <property type="term" value="C:cytosol"/>
    <property type="evidence" value="ECO:0007669"/>
    <property type="project" value="TreeGrafter"/>
</dbReference>
<dbReference type="GO" id="GO:0004107">
    <property type="term" value="F:chorismate synthase activity"/>
    <property type="evidence" value="ECO:0007669"/>
    <property type="project" value="UniProtKB-UniRule"/>
</dbReference>
<dbReference type="GO" id="GO:0010181">
    <property type="term" value="F:FMN binding"/>
    <property type="evidence" value="ECO:0007669"/>
    <property type="project" value="TreeGrafter"/>
</dbReference>
<dbReference type="GO" id="GO:0008652">
    <property type="term" value="P:amino acid biosynthetic process"/>
    <property type="evidence" value="ECO:0007669"/>
    <property type="project" value="UniProtKB-KW"/>
</dbReference>
<dbReference type="GO" id="GO:0009073">
    <property type="term" value="P:aromatic amino acid family biosynthetic process"/>
    <property type="evidence" value="ECO:0007669"/>
    <property type="project" value="UniProtKB-KW"/>
</dbReference>
<dbReference type="GO" id="GO:0009423">
    <property type="term" value="P:chorismate biosynthetic process"/>
    <property type="evidence" value="ECO:0007669"/>
    <property type="project" value="UniProtKB-UniRule"/>
</dbReference>
<dbReference type="CDD" id="cd07304">
    <property type="entry name" value="Chorismate_synthase"/>
    <property type="match status" value="1"/>
</dbReference>
<dbReference type="FunFam" id="3.60.150.10:FF:000001">
    <property type="entry name" value="Chorismate synthase"/>
    <property type="match status" value="1"/>
</dbReference>
<dbReference type="Gene3D" id="3.60.150.10">
    <property type="entry name" value="Chorismate synthase AroC"/>
    <property type="match status" value="1"/>
</dbReference>
<dbReference type="HAMAP" id="MF_00300">
    <property type="entry name" value="Chorismate_synth"/>
    <property type="match status" value="1"/>
</dbReference>
<dbReference type="InterPro" id="IPR000453">
    <property type="entry name" value="Chorismate_synth"/>
</dbReference>
<dbReference type="InterPro" id="IPR035904">
    <property type="entry name" value="Chorismate_synth_AroC_sf"/>
</dbReference>
<dbReference type="InterPro" id="IPR020541">
    <property type="entry name" value="Chorismate_synthase_CS"/>
</dbReference>
<dbReference type="NCBIfam" id="TIGR00033">
    <property type="entry name" value="aroC"/>
    <property type="match status" value="1"/>
</dbReference>
<dbReference type="NCBIfam" id="NF003793">
    <property type="entry name" value="PRK05382.1"/>
    <property type="match status" value="1"/>
</dbReference>
<dbReference type="PANTHER" id="PTHR21085">
    <property type="entry name" value="CHORISMATE SYNTHASE"/>
    <property type="match status" value="1"/>
</dbReference>
<dbReference type="PANTHER" id="PTHR21085:SF0">
    <property type="entry name" value="CHORISMATE SYNTHASE"/>
    <property type="match status" value="1"/>
</dbReference>
<dbReference type="Pfam" id="PF01264">
    <property type="entry name" value="Chorismate_synt"/>
    <property type="match status" value="1"/>
</dbReference>
<dbReference type="PIRSF" id="PIRSF001456">
    <property type="entry name" value="Chorismate_synth"/>
    <property type="match status" value="1"/>
</dbReference>
<dbReference type="SUPFAM" id="SSF103263">
    <property type="entry name" value="Chorismate synthase, AroC"/>
    <property type="match status" value="1"/>
</dbReference>
<dbReference type="PROSITE" id="PS00787">
    <property type="entry name" value="CHORISMATE_SYNTHASE_1"/>
    <property type="match status" value="1"/>
</dbReference>
<dbReference type="PROSITE" id="PS00788">
    <property type="entry name" value="CHORISMATE_SYNTHASE_2"/>
    <property type="match status" value="1"/>
</dbReference>
<dbReference type="PROSITE" id="PS00789">
    <property type="entry name" value="CHORISMATE_SYNTHASE_3"/>
    <property type="match status" value="1"/>
</dbReference>
<gene>
    <name evidence="1" type="primary">aroC</name>
    <name type="ordered locus">STY2616</name>
    <name type="ordered locus">t0480</name>
</gene>
<accession>P16280</accession>
<comment type="function">
    <text evidence="1">Catalyzes the anti-1,4-elimination of the C-3 phosphate and the C-6 proR hydrogen from 5-enolpyruvylshikimate-3-phosphate (EPSP) to yield chorismate, which is the branch point compound that serves as the starting substrate for the three terminal pathways of aromatic amino acid biosynthesis. This reaction introduces a second double bond into the aromatic ring system.</text>
</comment>
<comment type="catalytic activity">
    <reaction evidence="1">
        <text>5-O-(1-carboxyvinyl)-3-phosphoshikimate = chorismate + phosphate</text>
        <dbReference type="Rhea" id="RHEA:21020"/>
        <dbReference type="ChEBI" id="CHEBI:29748"/>
        <dbReference type="ChEBI" id="CHEBI:43474"/>
        <dbReference type="ChEBI" id="CHEBI:57701"/>
        <dbReference type="EC" id="4.2.3.5"/>
    </reaction>
</comment>
<comment type="cofactor">
    <cofactor evidence="1">
        <name>FMNH2</name>
        <dbReference type="ChEBI" id="CHEBI:57618"/>
    </cofactor>
    <text evidence="1">Reduced FMN (FMNH(2)).</text>
</comment>
<comment type="pathway">
    <text evidence="1">Metabolic intermediate biosynthesis; chorismate biosynthesis; chorismate from D-erythrose 4-phosphate and phosphoenolpyruvate: step 7/7.</text>
</comment>
<comment type="subunit">
    <text evidence="1">Homotetramer.</text>
</comment>
<comment type="similarity">
    <text evidence="1 2">Belongs to the chorismate synthase family.</text>
</comment>
<name>AROC_SALTI</name>
<evidence type="ECO:0000255" key="1">
    <source>
        <dbReference type="HAMAP-Rule" id="MF_00300"/>
    </source>
</evidence>
<evidence type="ECO:0000305" key="2"/>
<feature type="initiator methionine" description="Removed" evidence="2">
    <location>
        <position position="1"/>
    </location>
</feature>
<feature type="chain" id="PRO_0000140638" description="Chorismate synthase">
    <location>
        <begin position="2"/>
        <end position="361"/>
    </location>
</feature>
<feature type="binding site" evidence="1">
    <location>
        <position position="48"/>
    </location>
    <ligand>
        <name>NADP(+)</name>
        <dbReference type="ChEBI" id="CHEBI:58349"/>
    </ligand>
</feature>
<feature type="binding site" evidence="1">
    <location>
        <position position="54"/>
    </location>
    <ligand>
        <name>NADP(+)</name>
        <dbReference type="ChEBI" id="CHEBI:58349"/>
    </ligand>
</feature>
<feature type="binding site" evidence="1">
    <location>
        <begin position="125"/>
        <end position="127"/>
    </location>
    <ligand>
        <name>FMN</name>
        <dbReference type="ChEBI" id="CHEBI:58210"/>
    </ligand>
</feature>
<feature type="binding site" evidence="1">
    <location>
        <begin position="238"/>
        <end position="239"/>
    </location>
    <ligand>
        <name>FMN</name>
        <dbReference type="ChEBI" id="CHEBI:58210"/>
    </ligand>
</feature>
<feature type="binding site" evidence="1">
    <location>
        <position position="278"/>
    </location>
    <ligand>
        <name>FMN</name>
        <dbReference type="ChEBI" id="CHEBI:58210"/>
    </ligand>
</feature>
<feature type="binding site" evidence="1">
    <location>
        <begin position="293"/>
        <end position="297"/>
    </location>
    <ligand>
        <name>FMN</name>
        <dbReference type="ChEBI" id="CHEBI:58210"/>
    </ligand>
</feature>
<feature type="binding site" evidence="1">
    <location>
        <position position="319"/>
    </location>
    <ligand>
        <name>FMN</name>
        <dbReference type="ChEBI" id="CHEBI:58210"/>
    </ligand>
</feature>
<feature type="sequence conflict" description="In Ref. 1; AAA27029." evidence="2" ref="1">
    <original>L</original>
    <variation>V</variation>
    <location>
        <position position="23"/>
    </location>
</feature>
<proteinExistence type="inferred from homology"/>